<accession>Q9RRY0</accession>
<keyword id="KW-0627">Porphyrin biosynthesis</keyword>
<keyword id="KW-1185">Reference proteome</keyword>
<keyword id="KW-0808">Transferase</keyword>
<organism>
    <name type="scientific">Deinococcus radiodurans (strain ATCC 13939 / DSM 20539 / JCM 16871 / CCUG 27074 / LMG 4051 / NBRC 15346 / NCIMB 9279 / VKM B-1422 / R1)</name>
    <dbReference type="NCBI Taxonomy" id="243230"/>
    <lineage>
        <taxon>Bacteria</taxon>
        <taxon>Thermotogati</taxon>
        <taxon>Deinococcota</taxon>
        <taxon>Deinococci</taxon>
        <taxon>Deinococcales</taxon>
        <taxon>Deinococcaceae</taxon>
        <taxon>Deinococcus</taxon>
    </lineage>
</organism>
<feature type="chain" id="PRO_0000142932" description="Porphobilinogen deaminase">
    <location>
        <begin position="1"/>
        <end position="309"/>
    </location>
</feature>
<feature type="modified residue" description="S-(dipyrrolylmethanemethyl)cysteine" evidence="1">
    <location>
        <position position="243"/>
    </location>
</feature>
<name>HEM3_DEIRA</name>
<evidence type="ECO:0000250" key="1"/>
<evidence type="ECO:0000305" key="2"/>
<protein>
    <recommendedName>
        <fullName>Porphobilinogen deaminase</fullName>
        <shortName>PBG</shortName>
        <ecNumber>2.5.1.61</ecNumber>
    </recommendedName>
    <alternativeName>
        <fullName>Hydroxymethylbilane synthase</fullName>
        <shortName>HMBS</shortName>
    </alternativeName>
    <alternativeName>
        <fullName>Pre-uroporphyrinogen synthase</fullName>
    </alternativeName>
</protein>
<gene>
    <name type="primary">hemC</name>
    <name type="ordered locus">DR_2352</name>
</gene>
<proteinExistence type="inferred from homology"/>
<sequence length="309" mass="33587">MRTVTVGTRGSTLALAQTRWVVARLKEEWPETDFRIQTISTKGDRNRESLEQLAQKGDKGFWVKEIEEALLAKKIDIAVHSLKDLPTEQPEGLEISSIPKRVDGRDALIGREGMKKLAELPEGARIGTSSVRRKAFLRAYRPDLIVKDLRGNIDTRLAALGSGEYDAIILAAAGLIRTEQRHRIDEFVDPDILLPAPGQGALALETRTEDDLTIEVAYAIHDHATDDRITAEREFLAGLGAGCMAPVGAHAVIKNGLLTLEGWVGALDGTQVIRATSQGDVAECADIGAELAADMLERGAAELIEAVRE</sequence>
<comment type="function">
    <text evidence="1">Tetrapolymerization of the monopyrrole PBG into the hydroxymethylbilane pre-uroporphyrinogen in several discrete steps.</text>
</comment>
<comment type="catalytic activity">
    <reaction>
        <text>4 porphobilinogen + H2O = hydroxymethylbilane + 4 NH4(+)</text>
        <dbReference type="Rhea" id="RHEA:13185"/>
        <dbReference type="ChEBI" id="CHEBI:15377"/>
        <dbReference type="ChEBI" id="CHEBI:28938"/>
        <dbReference type="ChEBI" id="CHEBI:57845"/>
        <dbReference type="ChEBI" id="CHEBI:58126"/>
        <dbReference type="EC" id="2.5.1.61"/>
    </reaction>
</comment>
<comment type="cofactor">
    <cofactor evidence="1">
        <name>dipyrromethane</name>
        <dbReference type="ChEBI" id="CHEBI:60342"/>
    </cofactor>
    <text evidence="1">Binds 1 dipyrromethane group covalently.</text>
</comment>
<comment type="pathway">
    <text>Porphyrin-containing compound metabolism; protoporphyrin-IX biosynthesis; coproporphyrinogen-III from 5-aminolevulinate: step 2/4.</text>
</comment>
<comment type="subunit">
    <text evidence="1">Monomer.</text>
</comment>
<comment type="miscellaneous">
    <text evidence="1">The porphobilinogen subunits are added to the dipyrromethane group.</text>
</comment>
<comment type="similarity">
    <text evidence="2">Belongs to the HMBS family.</text>
</comment>
<reference key="1">
    <citation type="journal article" date="1999" name="Science">
        <title>Genome sequence of the radioresistant bacterium Deinococcus radiodurans R1.</title>
        <authorList>
            <person name="White O."/>
            <person name="Eisen J.A."/>
            <person name="Heidelberg J.F."/>
            <person name="Hickey E.K."/>
            <person name="Peterson J.D."/>
            <person name="Dodson R.J."/>
            <person name="Haft D.H."/>
            <person name="Gwinn M.L."/>
            <person name="Nelson W.C."/>
            <person name="Richardson D.L."/>
            <person name="Moffat K.S."/>
            <person name="Qin H."/>
            <person name="Jiang L."/>
            <person name="Pamphile W."/>
            <person name="Crosby M."/>
            <person name="Shen M."/>
            <person name="Vamathevan J.J."/>
            <person name="Lam P."/>
            <person name="McDonald L.A."/>
            <person name="Utterback T.R."/>
            <person name="Zalewski C."/>
            <person name="Makarova K.S."/>
            <person name="Aravind L."/>
            <person name="Daly M.J."/>
            <person name="Minton K.W."/>
            <person name="Fleischmann R.D."/>
            <person name="Ketchum K.A."/>
            <person name="Nelson K.E."/>
            <person name="Salzberg S.L."/>
            <person name="Smith H.O."/>
            <person name="Venter J.C."/>
            <person name="Fraser C.M."/>
        </authorList>
    </citation>
    <scope>NUCLEOTIDE SEQUENCE [LARGE SCALE GENOMIC DNA]</scope>
    <source>
        <strain>ATCC 13939 / DSM 20539 / JCM 16871 / CCUG 27074 / LMG 4051 / NBRC 15346 / NCIMB 9279 / VKM B-1422 / R1</strain>
    </source>
</reference>
<dbReference type="EC" id="2.5.1.61"/>
<dbReference type="EMBL" id="AE000513">
    <property type="protein sequence ID" value="AAF11898.1"/>
    <property type="molecule type" value="Genomic_DNA"/>
</dbReference>
<dbReference type="PIR" id="F75283">
    <property type="entry name" value="F75283"/>
</dbReference>
<dbReference type="RefSeq" id="NP_296073.1">
    <property type="nucleotide sequence ID" value="NC_001263.1"/>
</dbReference>
<dbReference type="RefSeq" id="WP_010888978.1">
    <property type="nucleotide sequence ID" value="NC_001263.1"/>
</dbReference>
<dbReference type="SMR" id="Q9RRY0"/>
<dbReference type="FunCoup" id="Q9RRY0">
    <property type="interactions" value="465"/>
</dbReference>
<dbReference type="STRING" id="243230.DR_2352"/>
<dbReference type="PaxDb" id="243230-DR_2352"/>
<dbReference type="EnsemblBacteria" id="AAF11898">
    <property type="protein sequence ID" value="AAF11898"/>
    <property type="gene ID" value="DR_2352"/>
</dbReference>
<dbReference type="GeneID" id="69518601"/>
<dbReference type="KEGG" id="dra:DR_2352"/>
<dbReference type="PATRIC" id="fig|243230.17.peg.2585"/>
<dbReference type="eggNOG" id="COG0181">
    <property type="taxonomic scope" value="Bacteria"/>
</dbReference>
<dbReference type="HOGENOM" id="CLU_019704_0_2_0"/>
<dbReference type="InParanoid" id="Q9RRY0"/>
<dbReference type="OrthoDB" id="9810298at2"/>
<dbReference type="UniPathway" id="UPA00251">
    <property type="reaction ID" value="UER00319"/>
</dbReference>
<dbReference type="Proteomes" id="UP000002524">
    <property type="component" value="Chromosome 1"/>
</dbReference>
<dbReference type="GO" id="GO:0005737">
    <property type="term" value="C:cytoplasm"/>
    <property type="evidence" value="ECO:0000318"/>
    <property type="project" value="GO_Central"/>
</dbReference>
<dbReference type="GO" id="GO:0004418">
    <property type="term" value="F:hydroxymethylbilane synthase activity"/>
    <property type="evidence" value="ECO:0000318"/>
    <property type="project" value="GO_Central"/>
</dbReference>
<dbReference type="GO" id="GO:0006783">
    <property type="term" value="P:heme biosynthetic process"/>
    <property type="evidence" value="ECO:0000318"/>
    <property type="project" value="GO_Central"/>
</dbReference>
<dbReference type="GO" id="GO:0006782">
    <property type="term" value="P:protoporphyrinogen IX biosynthetic process"/>
    <property type="evidence" value="ECO:0007669"/>
    <property type="project" value="UniProtKB-UniRule"/>
</dbReference>
<dbReference type="CDD" id="cd13646">
    <property type="entry name" value="PBP2_EcHMBS_like"/>
    <property type="match status" value="1"/>
</dbReference>
<dbReference type="FunFam" id="3.40.190.10:FF:000005">
    <property type="entry name" value="Porphobilinogen deaminase"/>
    <property type="match status" value="1"/>
</dbReference>
<dbReference type="FunFam" id="3.40.190.10:FF:000086">
    <property type="entry name" value="Probable porphobilinogen deaminase"/>
    <property type="match status" value="1"/>
</dbReference>
<dbReference type="Gene3D" id="3.40.190.10">
    <property type="entry name" value="Periplasmic binding protein-like II"/>
    <property type="match status" value="2"/>
</dbReference>
<dbReference type="Gene3D" id="3.30.160.40">
    <property type="entry name" value="Porphobilinogen deaminase, C-terminal domain"/>
    <property type="match status" value="1"/>
</dbReference>
<dbReference type="HAMAP" id="MF_00260">
    <property type="entry name" value="Porphobil_deam"/>
    <property type="match status" value="1"/>
</dbReference>
<dbReference type="InterPro" id="IPR000860">
    <property type="entry name" value="HemC"/>
</dbReference>
<dbReference type="InterPro" id="IPR022419">
    <property type="entry name" value="Porphobilin_deaminase_cofac_BS"/>
</dbReference>
<dbReference type="InterPro" id="IPR022417">
    <property type="entry name" value="Porphobilin_deaminase_N"/>
</dbReference>
<dbReference type="InterPro" id="IPR022418">
    <property type="entry name" value="Porphobilinogen_deaminase_C"/>
</dbReference>
<dbReference type="InterPro" id="IPR036803">
    <property type="entry name" value="Porphobilinogen_deaminase_C_sf"/>
</dbReference>
<dbReference type="NCBIfam" id="TIGR00212">
    <property type="entry name" value="hemC"/>
    <property type="match status" value="1"/>
</dbReference>
<dbReference type="PANTHER" id="PTHR11557">
    <property type="entry name" value="PORPHOBILINOGEN DEAMINASE"/>
    <property type="match status" value="1"/>
</dbReference>
<dbReference type="PANTHER" id="PTHR11557:SF0">
    <property type="entry name" value="PORPHOBILINOGEN DEAMINASE"/>
    <property type="match status" value="1"/>
</dbReference>
<dbReference type="Pfam" id="PF01379">
    <property type="entry name" value="Porphobil_deam"/>
    <property type="match status" value="1"/>
</dbReference>
<dbReference type="Pfam" id="PF03900">
    <property type="entry name" value="Porphobil_deamC"/>
    <property type="match status" value="1"/>
</dbReference>
<dbReference type="PIRSF" id="PIRSF001438">
    <property type="entry name" value="4pyrrol_synth_OHMeBilane_synth"/>
    <property type="match status" value="1"/>
</dbReference>
<dbReference type="PRINTS" id="PR00151">
    <property type="entry name" value="PORPHBDMNASE"/>
</dbReference>
<dbReference type="SUPFAM" id="SSF53850">
    <property type="entry name" value="Periplasmic binding protein-like II"/>
    <property type="match status" value="1"/>
</dbReference>
<dbReference type="SUPFAM" id="SSF54782">
    <property type="entry name" value="Porphobilinogen deaminase (hydroxymethylbilane synthase), C-terminal domain"/>
    <property type="match status" value="1"/>
</dbReference>
<dbReference type="PROSITE" id="PS00533">
    <property type="entry name" value="PORPHOBILINOGEN_DEAM"/>
    <property type="match status" value="1"/>
</dbReference>